<reference key="1">
    <citation type="submission" date="1993-04" db="EMBL/GenBank/DDBJ databases">
        <authorList>
            <person name="Lambert B."/>
        </authorList>
    </citation>
    <scope>NUCLEOTIDE SEQUENCE [GENOMIC DNA]</scope>
    <source>
        <strain>BTS00349A</strain>
    </source>
</reference>
<organism>
    <name type="scientific">Bacillus thuringiensis</name>
    <dbReference type="NCBI Taxonomy" id="1428"/>
    <lineage>
        <taxon>Bacteria</taxon>
        <taxon>Bacillati</taxon>
        <taxon>Bacillota</taxon>
        <taxon>Bacilli</taxon>
        <taxon>Bacillales</taxon>
        <taxon>Bacillaceae</taxon>
        <taxon>Bacillus</taxon>
        <taxon>Bacillus cereus group</taxon>
    </lineage>
</organism>
<accession>Q45747</accession>
<name>CR1DB_BACTU</name>
<feature type="chain" id="PRO_0000174039" description="Pesticidal crystal protein Cry1Db">
    <location>
        <begin position="1"/>
        <end position="1160"/>
    </location>
</feature>
<comment type="function">
    <text>Promotes colloidosmotic lysis by binding to the midgut epithelial cells of insects.</text>
</comment>
<comment type="developmental stage">
    <text>The crystal protein is produced during sporulation and is accumulated both as an inclusion and as part of the spore coat.</text>
</comment>
<comment type="miscellaneous">
    <text>Toxic segment of the protein is located in the N-terminus.</text>
</comment>
<comment type="similarity">
    <text evidence="1">Belongs to the delta endotoxin family.</text>
</comment>
<evidence type="ECO:0000305" key="1"/>
<dbReference type="EMBL" id="Z22511">
    <property type="protein sequence ID" value="CAA80234.1"/>
    <property type="molecule type" value="Genomic_DNA"/>
</dbReference>
<dbReference type="PIR" id="S32647">
    <property type="entry name" value="S32647"/>
</dbReference>
<dbReference type="RefSeq" id="WP_033700085.1">
    <property type="nucleotide sequence ID" value="NZ_KK088376.1"/>
</dbReference>
<dbReference type="SMR" id="Q45747"/>
<dbReference type="PATRIC" id="fig|1428.310.peg.5192"/>
<dbReference type="GO" id="GO:0005102">
    <property type="term" value="F:signaling receptor binding"/>
    <property type="evidence" value="ECO:0007669"/>
    <property type="project" value="InterPro"/>
</dbReference>
<dbReference type="GO" id="GO:0090729">
    <property type="term" value="F:toxin activity"/>
    <property type="evidence" value="ECO:0007669"/>
    <property type="project" value="UniProtKB-KW"/>
</dbReference>
<dbReference type="GO" id="GO:0030435">
    <property type="term" value="P:sporulation resulting in formation of a cellular spore"/>
    <property type="evidence" value="ECO:0007669"/>
    <property type="project" value="UniProtKB-KW"/>
</dbReference>
<dbReference type="GO" id="GO:0001907">
    <property type="term" value="P:symbiont-mediated killing of host cell"/>
    <property type="evidence" value="ECO:0007669"/>
    <property type="project" value="InterPro"/>
</dbReference>
<dbReference type="CDD" id="cd04085">
    <property type="entry name" value="delta_endotoxin_C"/>
    <property type="match status" value="1"/>
</dbReference>
<dbReference type="Gene3D" id="2.60.120.260">
    <property type="entry name" value="Galactose-binding domain-like"/>
    <property type="match status" value="1"/>
</dbReference>
<dbReference type="Gene3D" id="2.100.10.10">
    <property type="entry name" value="Pesticidal crystal protein, central domain"/>
    <property type="match status" value="1"/>
</dbReference>
<dbReference type="Gene3D" id="1.20.190.10">
    <property type="entry name" value="Pesticidal crystal protein, N-terminal domain"/>
    <property type="match status" value="1"/>
</dbReference>
<dbReference type="InterPro" id="IPR048645">
    <property type="entry name" value="Cry1Ac-like_dom-VII"/>
</dbReference>
<dbReference type="InterPro" id="IPR041587">
    <property type="entry name" value="Cry_V"/>
</dbReference>
<dbReference type="InterPro" id="IPR008979">
    <property type="entry name" value="Galactose-bd-like_sf"/>
</dbReference>
<dbReference type="InterPro" id="IPR038979">
    <property type="entry name" value="Pest_crys"/>
</dbReference>
<dbReference type="InterPro" id="IPR054544">
    <property type="entry name" value="Pest_crys_Cry1Aa_dom-IV"/>
</dbReference>
<dbReference type="InterPro" id="IPR005638">
    <property type="entry name" value="Pest_crys_dom-III"/>
</dbReference>
<dbReference type="InterPro" id="IPR005639">
    <property type="entry name" value="Pest_crys_dom_I"/>
</dbReference>
<dbReference type="InterPro" id="IPR036716">
    <property type="entry name" value="Pest_crys_N_sf"/>
</dbReference>
<dbReference type="InterPro" id="IPR036399">
    <property type="entry name" value="Pest_cryst_cen_dom_sf"/>
</dbReference>
<dbReference type="InterPro" id="IPR001178">
    <property type="entry name" value="Pest_cryst_dom_II"/>
</dbReference>
<dbReference type="PANTHER" id="PTHR37003">
    <property type="entry name" value="ENDOTOXIN_N DOMAIN-CONTAINING PROTEIN-RELATED"/>
    <property type="match status" value="1"/>
</dbReference>
<dbReference type="PANTHER" id="PTHR37003:SF2">
    <property type="entry name" value="PESTICIDAL CRYSTAL PROTEIN N-TERMINAL DOMAIN-CONTAINING PROTEIN"/>
    <property type="match status" value="1"/>
</dbReference>
<dbReference type="Pfam" id="PF17997">
    <property type="entry name" value="Cry1Ac_D5"/>
    <property type="match status" value="1"/>
</dbReference>
<dbReference type="Pfam" id="PF21463">
    <property type="entry name" value="Cry1Ac_dom-VII"/>
    <property type="match status" value="1"/>
</dbReference>
<dbReference type="Pfam" id="PF03944">
    <property type="entry name" value="Endotoxin_C"/>
    <property type="match status" value="1"/>
</dbReference>
<dbReference type="Pfam" id="PF18449">
    <property type="entry name" value="Endotoxin_C2"/>
    <property type="match status" value="1"/>
</dbReference>
<dbReference type="Pfam" id="PF00555">
    <property type="entry name" value="Endotoxin_M"/>
    <property type="match status" value="1"/>
</dbReference>
<dbReference type="Pfam" id="PF03945">
    <property type="entry name" value="Endotoxin_N"/>
    <property type="match status" value="1"/>
</dbReference>
<dbReference type="SUPFAM" id="SSF51096">
    <property type="entry name" value="delta-Endotoxin (insectocide), middle domain"/>
    <property type="match status" value="1"/>
</dbReference>
<dbReference type="SUPFAM" id="SSF56849">
    <property type="entry name" value="delta-Endotoxin (insectocide), N-terminal domain"/>
    <property type="match status" value="1"/>
</dbReference>
<dbReference type="SUPFAM" id="SSF49785">
    <property type="entry name" value="Galactose-binding domain-like"/>
    <property type="match status" value="1"/>
</dbReference>
<keyword id="KW-0749">Sporulation</keyword>
<keyword id="KW-0800">Toxin</keyword>
<keyword id="KW-0843">Virulence</keyword>
<proteinExistence type="evidence at transcript level"/>
<sequence>MDINHQNQCIPYNCLSNPDAILLDAERLETGNTVADISLGLINFLYSNFVPGGGFIVGLLELIWGFVGPSQWEIFLAQIEQLISQRIEEFARNQAISRLEGLSNNYEIYTETFRAWEKDPSNPALREEMRTQFNVMNSALIAAIPLLRVRNYEVALLSVYVQAANLHLSVLRDVSVYGQRWGFDPATVNSRYSDLTRLIHVYTDHCVDTYNDGLKNLEGSRLSDWVVYNRFRRRLTISVLDIIAFFPNYDIEAYPIQTASQLTREVYLDLPFVNETLSPPASYPTFSAAESAIIRSPHLVDFLNSFTIYTDSLASYAYWGGHLVNSFRTGTTTNLIRSPLYGREGNTERPVTISASPSVPIFRTLSYFTGLNNNNPVAGIEGVEFQNTISRSIYRKSGPIDSFSELPPQDVSVSPAIGYSHRLCHATFLERISGPRIAGTVFSWTHRSASPINEVSPSRITQIPWVKAHTLASGASVIKGPGFTGGDILTRNSMGDLGALRVTFTGRLPQSYYIRFRYASVANRSGTFRYSQPPSYGISFPKTMDAGEALTSRSFAHTTLFTPITFSRAQEEFDLYIQSGVYIDRIEFIPVDATFESEINLERAQKAVNALFTSTNQLGLKTDVTDYHIDQVSNLVECLSDEFCLDEKRELSEKVKHAKRLSDERNLLQDPNFRGINRQPDRGWRGSTDITIQGGDDVFKENYVTLTGTFDECYPTYLYQKIDESKLKAYTRYQLRGYIEDSQDLEIYLIRYNAKHEIVNVPGTGSLWPLSVQSPIGKCGEPNRCAPHLEWNPDLDCSCRDEEKCAHHSHHFSLDIDVGCTDLNEDLGVWVIFKIKTQDGHARLGNLEFLEEKPLVGEALARVKRAEKKWRDKREKLELETNIVYKEAKESVDALFVNSQYDQLQADTNIAMIHAADKRVHSIREAYLPELSVIPGVNAGIFEELEGRIFTAYSLYDARNVIKNGDFNNGLSCWNVKGHVDVEEQNNHRSVLVVPEWEAEVSQEVRVCPGRGYILRVTAYKEGYGEGCVTIHEVDNNTDELKFSNCEKEQVYPGNTVACNDYNKNHGANACSSRNRGYDESYESNSSIPADYAPVYEEEAYTDGQRGNPCEFNRGHTPLPAGYVTAELEYFPETDTVWVEIGETEGTFIVDSVELLLMEE</sequence>
<gene>
    <name type="primary">cry1Db</name>
    <name type="synonym">cryID(b)</name>
</gene>
<protein>
    <recommendedName>
        <fullName>Pesticidal crystal protein Cry1Db</fullName>
    </recommendedName>
    <alternativeName>
        <fullName>131 kDa crystal protein</fullName>
    </alternativeName>
    <alternativeName>
        <fullName>Crystaline entomocidal protoxin</fullName>
    </alternativeName>
    <alternativeName>
        <fullName>Insecticidal delta-endotoxin CryID(b)</fullName>
    </alternativeName>
</protein>